<evidence type="ECO:0000255" key="1"/>
<evidence type="ECO:0000255" key="2">
    <source>
        <dbReference type="PROSITE-ProRule" id="PRU00037"/>
    </source>
</evidence>
<evidence type="ECO:0000255" key="3">
    <source>
        <dbReference type="PROSITE-ProRule" id="PRU00042"/>
    </source>
</evidence>
<evidence type="ECO:0000256" key="4">
    <source>
        <dbReference type="SAM" id="MobiDB-lite"/>
    </source>
</evidence>
<evidence type="ECO:0000269" key="5">
    <source>
    </source>
</evidence>
<evidence type="ECO:0000269" key="6">
    <source>
    </source>
</evidence>
<evidence type="ECO:0000303" key="7">
    <source>
    </source>
</evidence>
<evidence type="ECO:0000303" key="8">
    <source>
    </source>
</evidence>
<evidence type="ECO:0000305" key="9"/>
<name>MYNN_MOUSE</name>
<reference key="1">
    <citation type="journal article" date="2000" name="Biochem. Biophys. Res. Commun.">
        <title>Myoneurin, a novel member of the BTB/POZ-zinc finger family highly expressed in human muscle.</title>
        <authorList>
            <person name="Alliel P.M."/>
            <person name="Seddiqi N."/>
            <person name="Goudou D."/>
            <person name="Cifuentes-Diaz C."/>
            <person name="Romero N."/>
            <person name="Velasco E."/>
            <person name="Rieger F."/>
            <person name="Perin J.-P."/>
        </authorList>
    </citation>
    <scope>NUCLEOTIDE SEQUENCE [MRNA] (ISOFORM 1)</scope>
    <scope>TISSUE SPECIFICITY</scope>
    <source>
        <tissue>Embryo</tissue>
    </source>
</reference>
<reference key="2">
    <citation type="journal article" date="2005" name="Science">
        <title>The transcriptional landscape of the mammalian genome.</title>
        <authorList>
            <person name="Carninci P."/>
            <person name="Kasukawa T."/>
            <person name="Katayama S."/>
            <person name="Gough J."/>
            <person name="Frith M.C."/>
            <person name="Maeda N."/>
            <person name="Oyama R."/>
            <person name="Ravasi T."/>
            <person name="Lenhard B."/>
            <person name="Wells C."/>
            <person name="Kodzius R."/>
            <person name="Shimokawa K."/>
            <person name="Bajic V.B."/>
            <person name="Brenner S.E."/>
            <person name="Batalov S."/>
            <person name="Forrest A.R."/>
            <person name="Zavolan M."/>
            <person name="Davis M.J."/>
            <person name="Wilming L.G."/>
            <person name="Aidinis V."/>
            <person name="Allen J.E."/>
            <person name="Ambesi-Impiombato A."/>
            <person name="Apweiler R."/>
            <person name="Aturaliya R.N."/>
            <person name="Bailey T.L."/>
            <person name="Bansal M."/>
            <person name="Baxter L."/>
            <person name="Beisel K.W."/>
            <person name="Bersano T."/>
            <person name="Bono H."/>
            <person name="Chalk A.M."/>
            <person name="Chiu K.P."/>
            <person name="Choudhary V."/>
            <person name="Christoffels A."/>
            <person name="Clutterbuck D.R."/>
            <person name="Crowe M.L."/>
            <person name="Dalla E."/>
            <person name="Dalrymple B.P."/>
            <person name="de Bono B."/>
            <person name="Della Gatta G."/>
            <person name="di Bernardo D."/>
            <person name="Down T."/>
            <person name="Engstrom P."/>
            <person name="Fagiolini M."/>
            <person name="Faulkner G."/>
            <person name="Fletcher C.F."/>
            <person name="Fukushima T."/>
            <person name="Furuno M."/>
            <person name="Futaki S."/>
            <person name="Gariboldi M."/>
            <person name="Georgii-Hemming P."/>
            <person name="Gingeras T.R."/>
            <person name="Gojobori T."/>
            <person name="Green R.E."/>
            <person name="Gustincich S."/>
            <person name="Harbers M."/>
            <person name="Hayashi Y."/>
            <person name="Hensch T.K."/>
            <person name="Hirokawa N."/>
            <person name="Hill D."/>
            <person name="Huminiecki L."/>
            <person name="Iacono M."/>
            <person name="Ikeo K."/>
            <person name="Iwama A."/>
            <person name="Ishikawa T."/>
            <person name="Jakt M."/>
            <person name="Kanapin A."/>
            <person name="Katoh M."/>
            <person name="Kawasawa Y."/>
            <person name="Kelso J."/>
            <person name="Kitamura H."/>
            <person name="Kitano H."/>
            <person name="Kollias G."/>
            <person name="Krishnan S.P."/>
            <person name="Kruger A."/>
            <person name="Kummerfeld S.K."/>
            <person name="Kurochkin I.V."/>
            <person name="Lareau L.F."/>
            <person name="Lazarevic D."/>
            <person name="Lipovich L."/>
            <person name="Liu J."/>
            <person name="Liuni S."/>
            <person name="McWilliam S."/>
            <person name="Madan Babu M."/>
            <person name="Madera M."/>
            <person name="Marchionni L."/>
            <person name="Matsuda H."/>
            <person name="Matsuzawa S."/>
            <person name="Miki H."/>
            <person name="Mignone F."/>
            <person name="Miyake S."/>
            <person name="Morris K."/>
            <person name="Mottagui-Tabar S."/>
            <person name="Mulder N."/>
            <person name="Nakano N."/>
            <person name="Nakauchi H."/>
            <person name="Ng P."/>
            <person name="Nilsson R."/>
            <person name="Nishiguchi S."/>
            <person name="Nishikawa S."/>
            <person name="Nori F."/>
            <person name="Ohara O."/>
            <person name="Okazaki Y."/>
            <person name="Orlando V."/>
            <person name="Pang K.C."/>
            <person name="Pavan W.J."/>
            <person name="Pavesi G."/>
            <person name="Pesole G."/>
            <person name="Petrovsky N."/>
            <person name="Piazza S."/>
            <person name="Reed J."/>
            <person name="Reid J.F."/>
            <person name="Ring B.Z."/>
            <person name="Ringwald M."/>
            <person name="Rost B."/>
            <person name="Ruan Y."/>
            <person name="Salzberg S.L."/>
            <person name="Sandelin A."/>
            <person name="Schneider C."/>
            <person name="Schoenbach C."/>
            <person name="Sekiguchi K."/>
            <person name="Semple C.A."/>
            <person name="Seno S."/>
            <person name="Sessa L."/>
            <person name="Sheng Y."/>
            <person name="Shibata Y."/>
            <person name="Shimada H."/>
            <person name="Shimada K."/>
            <person name="Silva D."/>
            <person name="Sinclair B."/>
            <person name="Sperling S."/>
            <person name="Stupka E."/>
            <person name="Sugiura K."/>
            <person name="Sultana R."/>
            <person name="Takenaka Y."/>
            <person name="Taki K."/>
            <person name="Tammoja K."/>
            <person name="Tan S.L."/>
            <person name="Tang S."/>
            <person name="Taylor M.S."/>
            <person name="Tegner J."/>
            <person name="Teichmann S.A."/>
            <person name="Ueda H.R."/>
            <person name="van Nimwegen E."/>
            <person name="Verardo R."/>
            <person name="Wei C.L."/>
            <person name="Yagi K."/>
            <person name="Yamanishi H."/>
            <person name="Zabarovsky E."/>
            <person name="Zhu S."/>
            <person name="Zimmer A."/>
            <person name="Hide W."/>
            <person name="Bult C."/>
            <person name="Grimmond S.M."/>
            <person name="Teasdale R.D."/>
            <person name="Liu E.T."/>
            <person name="Brusic V."/>
            <person name="Quackenbush J."/>
            <person name="Wahlestedt C."/>
            <person name="Mattick J.S."/>
            <person name="Hume D.A."/>
            <person name="Kai C."/>
            <person name="Sasaki D."/>
            <person name="Tomaru Y."/>
            <person name="Fukuda S."/>
            <person name="Kanamori-Katayama M."/>
            <person name="Suzuki M."/>
            <person name="Aoki J."/>
            <person name="Arakawa T."/>
            <person name="Iida J."/>
            <person name="Imamura K."/>
            <person name="Itoh M."/>
            <person name="Kato T."/>
            <person name="Kawaji H."/>
            <person name="Kawagashira N."/>
            <person name="Kawashima T."/>
            <person name="Kojima M."/>
            <person name="Kondo S."/>
            <person name="Konno H."/>
            <person name="Nakano K."/>
            <person name="Ninomiya N."/>
            <person name="Nishio T."/>
            <person name="Okada M."/>
            <person name="Plessy C."/>
            <person name="Shibata K."/>
            <person name="Shiraki T."/>
            <person name="Suzuki S."/>
            <person name="Tagami M."/>
            <person name="Waki K."/>
            <person name="Watahiki A."/>
            <person name="Okamura-Oho Y."/>
            <person name="Suzuki H."/>
            <person name="Kawai J."/>
            <person name="Hayashizaki Y."/>
        </authorList>
    </citation>
    <scope>NUCLEOTIDE SEQUENCE [LARGE SCALE MRNA] (ISOFORMS 1 AND 2)</scope>
    <source>
        <strain>C57BL/6J</strain>
        <tissue>Head</tissue>
    </source>
</reference>
<reference key="3">
    <citation type="journal article" date="2004" name="Genome Res.">
        <title>The status, quality, and expansion of the NIH full-length cDNA project: the Mammalian Gene Collection (MGC).</title>
        <authorList>
            <consortium name="The MGC Project Team"/>
        </authorList>
    </citation>
    <scope>NUCLEOTIDE SEQUENCE [LARGE SCALE MRNA] (ISOFORMS 1 AND 3)</scope>
    <source>
        <strain>C57BL/6J</strain>
        <strain>FVB/N</strain>
        <tissue>Brain</tissue>
        <tissue>Mammary tumor</tissue>
    </source>
</reference>
<reference key="4">
    <citation type="journal article" date="2004" name="Muscle Nerve">
        <title>Neuromuscular expression of the BTB/POZ and zinc finger protein myoneurin.</title>
        <authorList>
            <person name="Cifuentes-Diaz C."/>
            <person name="Bitoun M."/>
            <person name="Goudou D."/>
            <person name="Seddiqi N."/>
            <person name="Romero N."/>
            <person name="Rieger F."/>
            <person name="Perin J.-P."/>
            <person name="Alliel P.M."/>
        </authorList>
    </citation>
    <scope>SUBCELLULAR LOCATION</scope>
    <scope>TISSUE SPECIFICITY</scope>
    <scope>DEVELOPMENTAL STAGE</scope>
</reference>
<comment type="subcellular location">
    <subcellularLocation>
        <location evidence="6">Nucleus</location>
    </subcellularLocation>
</comment>
<comment type="alternative products">
    <event type="alternative splicing"/>
    <isoform>
        <id>Q99MD8-1</id>
        <name>1</name>
        <sequence type="displayed"/>
    </isoform>
    <isoform>
        <id>Q99MD8-2</id>
        <name>2</name>
        <sequence type="described" ref="VSP_020220"/>
    </isoform>
    <isoform>
        <id>Q99MD8-3</id>
        <name>3</name>
        <sequence type="described" ref="VSP_020218 VSP_020219"/>
    </isoform>
</comment>
<comment type="tissue specificity">
    <text evidence="5 6">Mainly expressed in the neuromuscular system. Located in and around synaptic myonuclei in adult muscle. Expression is dysregulated after nerve injury. Also found in the cerebellum, testis, heart, brain and liver.</text>
</comment>
<comment type="developmental stage">
    <text evidence="6">Expression is developmentally regulated in muscle and is associated with neuromuscular junctions during the late embryonic period.</text>
</comment>
<comment type="similarity">
    <text evidence="9">Belongs to the krueppel C2H2-type zinc-finger protein family.</text>
</comment>
<gene>
    <name type="primary">Mynn</name>
</gene>
<accession>Q99MD8</accession>
<accession>Q6P1G7</accession>
<accession>Q8BT55</accession>
<accession>Q922I4</accession>
<accession>Q9CSA0</accession>
<accession>Q9CXJ8</accession>
<keyword id="KW-0025">Alternative splicing</keyword>
<keyword id="KW-0238">DNA-binding</keyword>
<keyword id="KW-0479">Metal-binding</keyword>
<keyword id="KW-0539">Nucleus</keyword>
<keyword id="KW-1185">Reference proteome</keyword>
<keyword id="KW-0677">Repeat</keyword>
<keyword id="KW-0804">Transcription</keyword>
<keyword id="KW-0805">Transcription regulation</keyword>
<keyword id="KW-0862">Zinc</keyword>
<keyword id="KW-0863">Zinc-finger</keyword>
<dbReference type="EMBL" id="AF349561">
    <property type="protein sequence ID" value="AAK18605.1"/>
    <property type="molecule type" value="mRNA"/>
</dbReference>
<dbReference type="EMBL" id="AK014315">
    <property type="protein sequence ID" value="BAB29266.1"/>
    <property type="molecule type" value="mRNA"/>
</dbReference>
<dbReference type="EMBL" id="AK019238">
    <property type="protein sequence ID" value="BAC25584.2"/>
    <property type="molecule type" value="mRNA"/>
</dbReference>
<dbReference type="EMBL" id="AK013445">
    <property type="protein sequence ID" value="BAB28858.1"/>
    <property type="molecule type" value="mRNA"/>
</dbReference>
<dbReference type="EMBL" id="AK136107">
    <property type="protein sequence ID" value="BAE22823.1"/>
    <property type="molecule type" value="mRNA"/>
</dbReference>
<dbReference type="EMBL" id="BC007477">
    <property type="protein sequence ID" value="AAH07477.1"/>
    <property type="molecule type" value="mRNA"/>
</dbReference>
<dbReference type="EMBL" id="BC065084">
    <property type="protein sequence ID" value="AAH65084.1"/>
    <property type="molecule type" value="mRNA"/>
</dbReference>
<dbReference type="CCDS" id="CCDS17284.1">
    <molecule id="Q99MD8-1"/>
</dbReference>
<dbReference type="CCDS" id="CCDS79891.1">
    <molecule id="Q99MD8-2"/>
</dbReference>
<dbReference type="RefSeq" id="NP_001276550.1">
    <molecule id="Q99MD8-2"/>
    <property type="nucleotide sequence ID" value="NM_001289621.1"/>
</dbReference>
<dbReference type="RefSeq" id="NP_001276551.1">
    <property type="nucleotide sequence ID" value="NM_001289622.1"/>
</dbReference>
<dbReference type="RefSeq" id="NP_001276552.1">
    <property type="nucleotide sequence ID" value="NM_001289623.1"/>
</dbReference>
<dbReference type="RefSeq" id="NP_085034.2">
    <molecule id="Q99MD8-1"/>
    <property type="nucleotide sequence ID" value="NM_030557.3"/>
</dbReference>
<dbReference type="SMR" id="Q99MD8"/>
<dbReference type="BioGRID" id="219802">
    <property type="interactions" value="24"/>
</dbReference>
<dbReference type="FunCoup" id="Q99MD8">
    <property type="interactions" value="3107"/>
</dbReference>
<dbReference type="IntAct" id="Q99MD8">
    <property type="interactions" value="1"/>
</dbReference>
<dbReference type="STRING" id="10090.ENSMUSP00000141951"/>
<dbReference type="iPTMnet" id="Q99MD8"/>
<dbReference type="PhosphoSitePlus" id="Q99MD8"/>
<dbReference type="PaxDb" id="10090-ENSMUSP00000041034"/>
<dbReference type="PeptideAtlas" id="Q99MD8"/>
<dbReference type="ProteomicsDB" id="293599">
    <molecule id="Q99MD8-1"/>
</dbReference>
<dbReference type="ProteomicsDB" id="293600">
    <molecule id="Q99MD8-2"/>
</dbReference>
<dbReference type="Antibodypedia" id="18640">
    <property type="antibodies" value="253 antibodies from 27 providers"/>
</dbReference>
<dbReference type="DNASU" id="80732"/>
<dbReference type="Ensembl" id="ENSMUST00000047502.9">
    <molecule id="Q99MD8-2"/>
    <property type="protein sequence ID" value="ENSMUSP00000041034.9"/>
    <property type="gene ID" value="ENSMUSG00000037730.14"/>
</dbReference>
<dbReference type="Ensembl" id="ENSMUST00000192715.6">
    <molecule id="Q99MD8-1"/>
    <property type="protein sequence ID" value="ENSMUSP00000141951.2"/>
    <property type="gene ID" value="ENSMUSG00000037730.14"/>
</dbReference>
<dbReference type="Ensembl" id="ENSMUST00000195396.6">
    <molecule id="Q99MD8-3"/>
    <property type="protein sequence ID" value="ENSMUSP00000141623.2"/>
    <property type="gene ID" value="ENSMUSG00000037730.14"/>
</dbReference>
<dbReference type="Ensembl" id="ENSMUST00000195751.2">
    <molecule id="Q99MD8-3"/>
    <property type="protein sequence ID" value="ENSMUSP00000141450.2"/>
    <property type="gene ID" value="ENSMUSG00000037730.14"/>
</dbReference>
<dbReference type="GeneID" id="80732"/>
<dbReference type="KEGG" id="mmu:80732"/>
<dbReference type="UCSC" id="uc008oux.2">
    <molecule id="Q99MD8-1"/>
    <property type="organism name" value="mouse"/>
</dbReference>
<dbReference type="UCSC" id="uc008ouz.2">
    <molecule id="Q99MD8-2"/>
    <property type="organism name" value="mouse"/>
</dbReference>
<dbReference type="AGR" id="MGI:1931415"/>
<dbReference type="CTD" id="55892"/>
<dbReference type="MGI" id="MGI:1931415">
    <property type="gene designation" value="Mynn"/>
</dbReference>
<dbReference type="VEuPathDB" id="HostDB:ENSMUSG00000037730"/>
<dbReference type="eggNOG" id="KOG1721">
    <property type="taxonomic scope" value="Eukaryota"/>
</dbReference>
<dbReference type="GeneTree" id="ENSGT00940000161266"/>
<dbReference type="HOGENOM" id="CLU_022540_1_0_1"/>
<dbReference type="InParanoid" id="Q99MD8"/>
<dbReference type="OMA" id="RPICNIC"/>
<dbReference type="OrthoDB" id="8117402at2759"/>
<dbReference type="PhylomeDB" id="Q99MD8"/>
<dbReference type="TreeFam" id="TF330787"/>
<dbReference type="BioGRID-ORCS" id="80732">
    <property type="hits" value="3 hits in 77 CRISPR screens"/>
</dbReference>
<dbReference type="ChiTaRS" id="Mynn">
    <property type="organism name" value="mouse"/>
</dbReference>
<dbReference type="PRO" id="PR:Q99MD8"/>
<dbReference type="Proteomes" id="UP000000589">
    <property type="component" value="Chromosome 3"/>
</dbReference>
<dbReference type="RNAct" id="Q99MD8">
    <property type="molecule type" value="protein"/>
</dbReference>
<dbReference type="Bgee" id="ENSMUSG00000037730">
    <property type="expression patterns" value="Expressed in metanephric loop of Henle and 252 other cell types or tissues"/>
</dbReference>
<dbReference type="GO" id="GO:0005654">
    <property type="term" value="C:nucleoplasm"/>
    <property type="evidence" value="ECO:0007669"/>
    <property type="project" value="Ensembl"/>
</dbReference>
<dbReference type="GO" id="GO:0003677">
    <property type="term" value="F:DNA binding"/>
    <property type="evidence" value="ECO:0007669"/>
    <property type="project" value="UniProtKB-KW"/>
</dbReference>
<dbReference type="GO" id="GO:0008270">
    <property type="term" value="F:zinc ion binding"/>
    <property type="evidence" value="ECO:0007669"/>
    <property type="project" value="UniProtKB-KW"/>
</dbReference>
<dbReference type="GO" id="GO:1990830">
    <property type="term" value="P:cellular response to leukemia inhibitory factor"/>
    <property type="evidence" value="ECO:0000270"/>
    <property type="project" value="MGI"/>
</dbReference>
<dbReference type="CDD" id="cd18217">
    <property type="entry name" value="BTB_POZ_ZBTB31_myoneurin"/>
    <property type="match status" value="1"/>
</dbReference>
<dbReference type="FunFam" id="3.30.160.60:FF:000029">
    <property type="entry name" value="GLI family zinc finger 4"/>
    <property type="match status" value="1"/>
</dbReference>
<dbReference type="FunFam" id="3.30.160.60:FF:000678">
    <property type="entry name" value="Myoneurin isoform X1"/>
    <property type="match status" value="1"/>
</dbReference>
<dbReference type="FunFam" id="3.30.160.60:FF:000472">
    <property type="entry name" value="myoneurin isoform X1"/>
    <property type="match status" value="1"/>
</dbReference>
<dbReference type="FunFam" id="3.30.160.60:FF:000816">
    <property type="entry name" value="myoneurin isoform X1"/>
    <property type="match status" value="1"/>
</dbReference>
<dbReference type="FunFam" id="3.30.160.60:FF:001185">
    <property type="entry name" value="myoneurin isoform X1"/>
    <property type="match status" value="1"/>
</dbReference>
<dbReference type="FunFam" id="3.30.710.10:FF:000051">
    <property type="entry name" value="myoneurin isoform X1"/>
    <property type="match status" value="1"/>
</dbReference>
<dbReference type="FunFam" id="3.30.160.60:FF:000267">
    <property type="entry name" value="Zinc finger and BTB domain-containing 49"/>
    <property type="match status" value="1"/>
</dbReference>
<dbReference type="FunFam" id="3.30.160.60:FF:001450">
    <property type="entry name" value="zinc finger protein 774"/>
    <property type="match status" value="1"/>
</dbReference>
<dbReference type="FunFam" id="3.30.160.60:FF:002586">
    <property type="entry name" value="Zinc finger protein 787"/>
    <property type="match status" value="1"/>
</dbReference>
<dbReference type="Gene3D" id="3.30.160.60">
    <property type="entry name" value="Classic Zinc Finger"/>
    <property type="match status" value="8"/>
</dbReference>
<dbReference type="Gene3D" id="3.30.710.10">
    <property type="entry name" value="Potassium Channel Kv1.1, Chain A"/>
    <property type="match status" value="1"/>
</dbReference>
<dbReference type="InterPro" id="IPR000210">
    <property type="entry name" value="BTB/POZ_dom"/>
</dbReference>
<dbReference type="InterPro" id="IPR050589">
    <property type="entry name" value="Ikaros_C2H2-ZF"/>
</dbReference>
<dbReference type="InterPro" id="IPR011333">
    <property type="entry name" value="SKP1/BTB/POZ_sf"/>
</dbReference>
<dbReference type="InterPro" id="IPR036236">
    <property type="entry name" value="Znf_C2H2_sf"/>
</dbReference>
<dbReference type="InterPro" id="IPR013087">
    <property type="entry name" value="Znf_C2H2_type"/>
</dbReference>
<dbReference type="PANTHER" id="PTHR24404:SF114">
    <property type="entry name" value="KLUMPFUSS, ISOFORM B-RELATED"/>
    <property type="match status" value="1"/>
</dbReference>
<dbReference type="PANTHER" id="PTHR24404">
    <property type="entry name" value="ZINC FINGER PROTEIN"/>
    <property type="match status" value="1"/>
</dbReference>
<dbReference type="Pfam" id="PF00651">
    <property type="entry name" value="BTB"/>
    <property type="match status" value="1"/>
</dbReference>
<dbReference type="Pfam" id="PF00096">
    <property type="entry name" value="zf-C2H2"/>
    <property type="match status" value="6"/>
</dbReference>
<dbReference type="Pfam" id="PF13912">
    <property type="entry name" value="zf-C2H2_6"/>
    <property type="match status" value="1"/>
</dbReference>
<dbReference type="SMART" id="SM00225">
    <property type="entry name" value="BTB"/>
    <property type="match status" value="1"/>
</dbReference>
<dbReference type="SMART" id="SM00355">
    <property type="entry name" value="ZnF_C2H2"/>
    <property type="match status" value="8"/>
</dbReference>
<dbReference type="SUPFAM" id="SSF57667">
    <property type="entry name" value="beta-beta-alpha zinc fingers"/>
    <property type="match status" value="5"/>
</dbReference>
<dbReference type="SUPFAM" id="SSF54695">
    <property type="entry name" value="POZ domain"/>
    <property type="match status" value="1"/>
</dbReference>
<dbReference type="PROSITE" id="PS50097">
    <property type="entry name" value="BTB"/>
    <property type="match status" value="1"/>
</dbReference>
<dbReference type="PROSITE" id="PS00028">
    <property type="entry name" value="ZINC_FINGER_C2H2_1"/>
    <property type="match status" value="8"/>
</dbReference>
<dbReference type="PROSITE" id="PS50157">
    <property type="entry name" value="ZINC_FINGER_C2H2_2"/>
    <property type="match status" value="8"/>
</dbReference>
<organism>
    <name type="scientific">Mus musculus</name>
    <name type="common">Mouse</name>
    <dbReference type="NCBI Taxonomy" id="10090"/>
    <lineage>
        <taxon>Eukaryota</taxon>
        <taxon>Metazoa</taxon>
        <taxon>Chordata</taxon>
        <taxon>Craniata</taxon>
        <taxon>Vertebrata</taxon>
        <taxon>Euteleostomi</taxon>
        <taxon>Mammalia</taxon>
        <taxon>Eutheria</taxon>
        <taxon>Euarchontoglires</taxon>
        <taxon>Glires</taxon>
        <taxon>Rodentia</taxon>
        <taxon>Myomorpha</taxon>
        <taxon>Muroidea</taxon>
        <taxon>Muridae</taxon>
        <taxon>Murinae</taxon>
        <taxon>Mus</taxon>
        <taxon>Mus</taxon>
    </lineage>
</organism>
<feature type="chain" id="PRO_0000248218" description="Myoneurin">
    <location>
        <begin position="1"/>
        <end position="610"/>
    </location>
</feature>
<feature type="domain" description="BTB" evidence="2">
    <location>
        <begin position="24"/>
        <end position="89"/>
    </location>
</feature>
<feature type="zinc finger region" description="C2H2-type 1" evidence="3">
    <location>
        <begin position="302"/>
        <end position="324"/>
    </location>
</feature>
<feature type="zinc finger region" description="C2H2-type 2" evidence="3">
    <location>
        <begin position="330"/>
        <end position="352"/>
    </location>
</feature>
<feature type="zinc finger region" description="C2H2-type 3" evidence="3">
    <location>
        <begin position="358"/>
        <end position="381"/>
    </location>
</feature>
<feature type="zinc finger region" description="C2H2-type 4" evidence="3">
    <location>
        <begin position="387"/>
        <end position="409"/>
    </location>
</feature>
<feature type="zinc finger region" description="C2H2-type 5" evidence="3">
    <location>
        <begin position="415"/>
        <end position="437"/>
    </location>
</feature>
<feature type="zinc finger region" description="C2H2-type 6" evidence="3">
    <location>
        <begin position="443"/>
        <end position="465"/>
    </location>
</feature>
<feature type="zinc finger region" description="C2H2-type 7" evidence="3">
    <location>
        <begin position="471"/>
        <end position="493"/>
    </location>
</feature>
<feature type="zinc finger region" description="C2H2-type 8" evidence="3">
    <location>
        <begin position="499"/>
        <end position="522"/>
    </location>
</feature>
<feature type="region of interest" description="Disordered" evidence="4">
    <location>
        <begin position="156"/>
        <end position="199"/>
    </location>
</feature>
<feature type="region of interest" description="Disordered" evidence="4">
    <location>
        <begin position="519"/>
        <end position="548"/>
    </location>
</feature>
<feature type="short sequence motif" description="Nuclear localization signal" evidence="1">
    <location>
        <begin position="174"/>
        <end position="190"/>
    </location>
</feature>
<feature type="short sequence motif" description="Nuclear localization signal" evidence="1">
    <location>
        <begin position="257"/>
        <end position="262"/>
    </location>
</feature>
<feature type="compositionally biased region" description="Basic residues" evidence="4">
    <location>
        <begin position="171"/>
        <end position="185"/>
    </location>
</feature>
<feature type="compositionally biased region" description="Basic and acidic residues" evidence="4">
    <location>
        <begin position="523"/>
        <end position="539"/>
    </location>
</feature>
<feature type="splice variant" id="VSP_020218" description="In isoform 3." evidence="7">
    <original>SEYFGAIYRSTSENN</original>
    <variation>IGMLKKSIRLLTISK</variation>
    <location>
        <begin position="46"/>
        <end position="60"/>
    </location>
</feature>
<feature type="splice variant" id="VSP_020219" description="In isoform 3." evidence="7">
    <location>
        <begin position="61"/>
        <end position="610"/>
    </location>
</feature>
<feature type="splice variant" id="VSP_020220" description="In isoform 2." evidence="8">
    <location>
        <begin position="468"/>
        <end position="495"/>
    </location>
</feature>
<feature type="sequence conflict" description="In Ref. 2; BAB28858." evidence="9" ref="2">
    <original>T</original>
    <variation>A</variation>
    <location>
        <position position="127"/>
    </location>
</feature>
<feature type="sequence conflict" description="In Ref. 2; BAC25584." evidence="9" ref="2">
    <original>S</original>
    <variation>I</variation>
    <location>
        <position position="130"/>
    </location>
</feature>
<feature type="sequence conflict" description="In Ref. 2; BAB29266." evidence="9" ref="2">
    <original>K</original>
    <variation>Q</variation>
    <location>
        <position position="168"/>
    </location>
</feature>
<feature type="sequence conflict" description="In Ref. 2; BAB29266." evidence="9" ref="2">
    <original>A</original>
    <variation>G</variation>
    <location>
        <position position="185"/>
    </location>
</feature>
<feature type="sequence conflict" description="In Ref. 1; AAK18605." evidence="9" ref="1">
    <original>E</original>
    <variation>G</variation>
    <location>
        <position position="440"/>
    </location>
</feature>
<feature type="sequence conflict" description="In Ref. 2; BAC25584." evidence="9" ref="2">
    <original>K</original>
    <variation>E</variation>
    <location>
        <position position="512"/>
    </location>
</feature>
<feature type="sequence conflict" description="In Ref. 2; BAC25584." evidence="9" ref="2">
    <original>K</original>
    <variation>E</variation>
    <location>
        <position position="518"/>
    </location>
</feature>
<protein>
    <recommendedName>
        <fullName>Myoneurin</fullName>
    </recommendedName>
</protein>
<sequence length="610" mass="68593">MQYSHHCEHLLERLNKQREAGFLCDCTVVIGEFQFKAHRNVLASFSEYFGAIYRSTSENNVFLDQSQVKADGFQKLLEFIYTGTLNLDSWNVKEIHQAADYLKVEEVVTKCKIKMEDFAFIASPSSTEISSITGNIELNQQACLLTLRDYNNREKSEVSTDSVQANPKPRALTKKSSQSKKKKKAFSSQKPGQSKAVQYPSDVLESASVELFLETSKLSSPVVEQIIQGNDSSELELTSVVENTFPTQDIVQTVTVKRKRRKSQSHCALKEHSMSNIASVKSPYELENAGEELDARFSKAKPMCNTCGKVFSEASSLRRHMRIHKGVKPYVCHLCGKAFTQCNQLKTHVRTHTGERPYKCELCDKGFAQKCQLVFHSRMHHGEEKPYKCDVCNLQFATSSNLKIHARKHSGEKPYVCDRCGQRFAQASTLTYHVRRHTGEKPYVCDTCGKAFAVSSSLITHSRKHTGEKPYICGICGKSFISSGELNKHFRSHTGERPFICELCGNSYTDIKNLKKHKTKVHSGTDKNPDCSVDDHAVSEQDSVQRSPLSETLDVKPSDMTLPLALPLGTEDHQMLLPVTDSQSPASDTLLRSTVNGYSEPQLIFLQQLY</sequence>
<proteinExistence type="evidence at transcript level"/>